<name>PNP_DEHMB</name>
<proteinExistence type="inferred from homology"/>
<organism>
    <name type="scientific">Dehalococcoides mccartyi (strain ATCC BAA-2100 / JCM 16839 / KCTC 5957 / BAV1)</name>
    <dbReference type="NCBI Taxonomy" id="216389"/>
    <lineage>
        <taxon>Bacteria</taxon>
        <taxon>Bacillati</taxon>
        <taxon>Chloroflexota</taxon>
        <taxon>Dehalococcoidia</taxon>
        <taxon>Dehalococcoidales</taxon>
        <taxon>Dehalococcoidaceae</taxon>
        <taxon>Dehalococcoides</taxon>
    </lineage>
</organism>
<protein>
    <recommendedName>
        <fullName evidence="1">Polyribonucleotide nucleotidyltransferase</fullName>
        <ecNumber evidence="1">2.7.7.8</ecNumber>
    </recommendedName>
    <alternativeName>
        <fullName evidence="1">Polynucleotide phosphorylase</fullName>
        <shortName evidence="1">PNPase</shortName>
    </alternativeName>
</protein>
<keyword id="KW-0963">Cytoplasm</keyword>
<keyword id="KW-0460">Magnesium</keyword>
<keyword id="KW-0479">Metal-binding</keyword>
<keyword id="KW-0548">Nucleotidyltransferase</keyword>
<keyword id="KW-0694">RNA-binding</keyword>
<keyword id="KW-0808">Transferase</keyword>
<comment type="function">
    <text evidence="1">Involved in mRNA degradation. Catalyzes the phosphorolysis of single-stranded polyribonucleotides processively in the 3'- to 5'-direction.</text>
</comment>
<comment type="catalytic activity">
    <reaction evidence="1">
        <text>RNA(n+1) + phosphate = RNA(n) + a ribonucleoside 5'-diphosphate</text>
        <dbReference type="Rhea" id="RHEA:22096"/>
        <dbReference type="Rhea" id="RHEA-COMP:14527"/>
        <dbReference type="Rhea" id="RHEA-COMP:17342"/>
        <dbReference type="ChEBI" id="CHEBI:43474"/>
        <dbReference type="ChEBI" id="CHEBI:57930"/>
        <dbReference type="ChEBI" id="CHEBI:140395"/>
        <dbReference type="EC" id="2.7.7.8"/>
    </reaction>
</comment>
<comment type="cofactor">
    <cofactor evidence="1">
        <name>Mg(2+)</name>
        <dbReference type="ChEBI" id="CHEBI:18420"/>
    </cofactor>
</comment>
<comment type="subcellular location">
    <subcellularLocation>
        <location evidence="1">Cytoplasm</location>
    </subcellularLocation>
</comment>
<comment type="similarity">
    <text evidence="1">Belongs to the polyribonucleotide nucleotidyltransferase family.</text>
</comment>
<evidence type="ECO:0000255" key="1">
    <source>
        <dbReference type="HAMAP-Rule" id="MF_01595"/>
    </source>
</evidence>
<evidence type="ECO:0000256" key="2">
    <source>
        <dbReference type="SAM" id="MobiDB-lite"/>
    </source>
</evidence>
<sequence>MITANSFERTIGGRKLVIESGKLARLADAAITIRYADTELLVTLCSAKKPREGVDFLPLTIDYEERMYAAGKIPGGFIRREGRPSEQAILAGRLTDRPLRPLLPKEWRNDLQIIITVIASDKENDADIWGVVGASTVLAMSEIPYEGPVGASRIGYINGEFVLNPTFAQLESSQLDLVVVSTRKAVVMIEAGSKEIPEDIMINAIEFAHKANQELIDLQDEIRAKLGKEKLPVPVLEIPEEVKTAVAAFVKGRVNEALSHQDKTARENAVEGLQAELVAALSETFAEGDILAAYDKEIKKAIRSTILEKDIRVNGRGIKQLRQLDAETGLLPRVHGSALFTRGDTQVMAITTLGSLQESQQLDGLSAEDTKRFMLHYNFAPFSTGEVKRSGSPGRREIGHGALAERALVPILPTPEEFPYTIRLVADVVGSSGSTSMGSVCSSSLSLMDAGVPVKKAVAGISIGLITGENGTYCTITDIEGIEDNYGDMDFKVAGTRDGITAIQVDMKVKGISFDIIRDAIYQAKEARYNILDVMDKALAQPKTELSPYAPRMYKINIDPSKIGSVIGSGGKTIRSIIEQTNTTVDIENDGTVVIGAIDEASAKKAIKIIEDLTKDIEAGSIYTGKVTRIMTFGAFVEILPGKEGMVHISELADHRVEKVEDIVKVGDDITVKVIEIDNQGRVNLSHRVILNPNAVPISRNRDSQPRRPGPFRPSDRSNS</sequence>
<gene>
    <name evidence="1" type="primary">pnp</name>
    <name type="ordered locus">DehaBAV1_0861</name>
</gene>
<accession>A5FQT2</accession>
<feature type="chain" id="PRO_0000329618" description="Polyribonucleotide nucleotidyltransferase">
    <location>
        <begin position="1"/>
        <end position="720"/>
    </location>
</feature>
<feature type="domain" description="KH" evidence="1">
    <location>
        <begin position="551"/>
        <end position="610"/>
    </location>
</feature>
<feature type="domain" description="S1 motif" evidence="1">
    <location>
        <begin position="620"/>
        <end position="688"/>
    </location>
</feature>
<feature type="region of interest" description="Disordered" evidence="2">
    <location>
        <begin position="697"/>
        <end position="720"/>
    </location>
</feature>
<feature type="binding site" evidence="1">
    <location>
        <position position="484"/>
    </location>
    <ligand>
        <name>Mg(2+)</name>
        <dbReference type="ChEBI" id="CHEBI:18420"/>
    </ligand>
</feature>
<feature type="binding site" evidence="1">
    <location>
        <position position="490"/>
    </location>
    <ligand>
        <name>Mg(2+)</name>
        <dbReference type="ChEBI" id="CHEBI:18420"/>
    </ligand>
</feature>
<dbReference type="EC" id="2.7.7.8" evidence="1"/>
<dbReference type="EMBL" id="CP000688">
    <property type="protein sequence ID" value="ABQ17443.1"/>
    <property type="molecule type" value="Genomic_DNA"/>
</dbReference>
<dbReference type="SMR" id="A5FQT2"/>
<dbReference type="KEGG" id="deb:DehaBAV1_0861"/>
<dbReference type="PATRIC" id="fig|216389.18.peg.911"/>
<dbReference type="HOGENOM" id="CLU_004217_2_2_0"/>
<dbReference type="GO" id="GO:0005829">
    <property type="term" value="C:cytosol"/>
    <property type="evidence" value="ECO:0007669"/>
    <property type="project" value="TreeGrafter"/>
</dbReference>
<dbReference type="GO" id="GO:0000175">
    <property type="term" value="F:3'-5'-RNA exonuclease activity"/>
    <property type="evidence" value="ECO:0007669"/>
    <property type="project" value="TreeGrafter"/>
</dbReference>
<dbReference type="GO" id="GO:0000287">
    <property type="term" value="F:magnesium ion binding"/>
    <property type="evidence" value="ECO:0007669"/>
    <property type="project" value="UniProtKB-UniRule"/>
</dbReference>
<dbReference type="GO" id="GO:0004654">
    <property type="term" value="F:polyribonucleotide nucleotidyltransferase activity"/>
    <property type="evidence" value="ECO:0007669"/>
    <property type="project" value="UniProtKB-UniRule"/>
</dbReference>
<dbReference type="GO" id="GO:0003723">
    <property type="term" value="F:RNA binding"/>
    <property type="evidence" value="ECO:0007669"/>
    <property type="project" value="UniProtKB-UniRule"/>
</dbReference>
<dbReference type="GO" id="GO:0006402">
    <property type="term" value="P:mRNA catabolic process"/>
    <property type="evidence" value="ECO:0007669"/>
    <property type="project" value="UniProtKB-UniRule"/>
</dbReference>
<dbReference type="GO" id="GO:0006396">
    <property type="term" value="P:RNA processing"/>
    <property type="evidence" value="ECO:0007669"/>
    <property type="project" value="InterPro"/>
</dbReference>
<dbReference type="CDD" id="cd02393">
    <property type="entry name" value="KH-I_PNPase"/>
    <property type="match status" value="1"/>
</dbReference>
<dbReference type="CDD" id="cd11363">
    <property type="entry name" value="RNase_PH_PNPase_1"/>
    <property type="match status" value="1"/>
</dbReference>
<dbReference type="CDD" id="cd11364">
    <property type="entry name" value="RNase_PH_PNPase_2"/>
    <property type="match status" value="1"/>
</dbReference>
<dbReference type="CDD" id="cd04472">
    <property type="entry name" value="S1_PNPase"/>
    <property type="match status" value="1"/>
</dbReference>
<dbReference type="FunFam" id="2.40.50.140:FF:000023">
    <property type="entry name" value="Polyribonucleotide nucleotidyltransferase"/>
    <property type="match status" value="1"/>
</dbReference>
<dbReference type="FunFam" id="3.30.1370.10:FF:000001">
    <property type="entry name" value="Polyribonucleotide nucleotidyltransferase"/>
    <property type="match status" value="1"/>
</dbReference>
<dbReference type="FunFam" id="3.30.230.70:FF:000001">
    <property type="entry name" value="Polyribonucleotide nucleotidyltransferase"/>
    <property type="match status" value="1"/>
</dbReference>
<dbReference type="FunFam" id="3.30.230.70:FF:000068">
    <property type="entry name" value="Polyribonucleotide nucleotidyltransferase"/>
    <property type="match status" value="1"/>
</dbReference>
<dbReference type="Gene3D" id="3.30.230.70">
    <property type="entry name" value="GHMP Kinase, N-terminal domain"/>
    <property type="match status" value="2"/>
</dbReference>
<dbReference type="Gene3D" id="3.30.1370.10">
    <property type="entry name" value="K Homology domain, type 1"/>
    <property type="match status" value="1"/>
</dbReference>
<dbReference type="Gene3D" id="2.40.50.140">
    <property type="entry name" value="Nucleic acid-binding proteins"/>
    <property type="match status" value="1"/>
</dbReference>
<dbReference type="HAMAP" id="MF_01595">
    <property type="entry name" value="PNPase"/>
    <property type="match status" value="1"/>
</dbReference>
<dbReference type="InterPro" id="IPR001247">
    <property type="entry name" value="ExoRNase_PH_dom1"/>
</dbReference>
<dbReference type="InterPro" id="IPR015847">
    <property type="entry name" value="ExoRNase_PH_dom2"/>
</dbReference>
<dbReference type="InterPro" id="IPR036345">
    <property type="entry name" value="ExoRNase_PH_dom2_sf"/>
</dbReference>
<dbReference type="InterPro" id="IPR004087">
    <property type="entry name" value="KH_dom"/>
</dbReference>
<dbReference type="InterPro" id="IPR004088">
    <property type="entry name" value="KH_dom_type_1"/>
</dbReference>
<dbReference type="InterPro" id="IPR036612">
    <property type="entry name" value="KH_dom_type_1_sf"/>
</dbReference>
<dbReference type="InterPro" id="IPR012340">
    <property type="entry name" value="NA-bd_OB-fold"/>
</dbReference>
<dbReference type="InterPro" id="IPR012162">
    <property type="entry name" value="PNPase"/>
</dbReference>
<dbReference type="InterPro" id="IPR027408">
    <property type="entry name" value="PNPase/RNase_PH_dom_sf"/>
</dbReference>
<dbReference type="InterPro" id="IPR015848">
    <property type="entry name" value="PNPase_PH_RNA-bd_bac/org-type"/>
</dbReference>
<dbReference type="InterPro" id="IPR036456">
    <property type="entry name" value="PNPase_PH_RNA-bd_sf"/>
</dbReference>
<dbReference type="InterPro" id="IPR020568">
    <property type="entry name" value="Ribosomal_Su5_D2-typ_SF"/>
</dbReference>
<dbReference type="InterPro" id="IPR003029">
    <property type="entry name" value="S1_domain"/>
</dbReference>
<dbReference type="NCBIfam" id="TIGR03591">
    <property type="entry name" value="polynuc_phos"/>
    <property type="match status" value="1"/>
</dbReference>
<dbReference type="NCBIfam" id="NF008805">
    <property type="entry name" value="PRK11824.1"/>
    <property type="match status" value="1"/>
</dbReference>
<dbReference type="PANTHER" id="PTHR11252">
    <property type="entry name" value="POLYRIBONUCLEOTIDE NUCLEOTIDYLTRANSFERASE"/>
    <property type="match status" value="1"/>
</dbReference>
<dbReference type="PANTHER" id="PTHR11252:SF0">
    <property type="entry name" value="POLYRIBONUCLEOTIDE NUCLEOTIDYLTRANSFERASE 1, MITOCHONDRIAL"/>
    <property type="match status" value="1"/>
</dbReference>
<dbReference type="Pfam" id="PF00013">
    <property type="entry name" value="KH_1"/>
    <property type="match status" value="1"/>
</dbReference>
<dbReference type="Pfam" id="PF03726">
    <property type="entry name" value="PNPase"/>
    <property type="match status" value="1"/>
</dbReference>
<dbReference type="Pfam" id="PF01138">
    <property type="entry name" value="RNase_PH"/>
    <property type="match status" value="2"/>
</dbReference>
<dbReference type="Pfam" id="PF03725">
    <property type="entry name" value="RNase_PH_C"/>
    <property type="match status" value="1"/>
</dbReference>
<dbReference type="Pfam" id="PF00575">
    <property type="entry name" value="S1"/>
    <property type="match status" value="1"/>
</dbReference>
<dbReference type="PIRSF" id="PIRSF005499">
    <property type="entry name" value="PNPase"/>
    <property type="match status" value="1"/>
</dbReference>
<dbReference type="SMART" id="SM00322">
    <property type="entry name" value="KH"/>
    <property type="match status" value="1"/>
</dbReference>
<dbReference type="SMART" id="SM00316">
    <property type="entry name" value="S1"/>
    <property type="match status" value="1"/>
</dbReference>
<dbReference type="SUPFAM" id="SSF54791">
    <property type="entry name" value="Eukaryotic type KH-domain (KH-domain type I)"/>
    <property type="match status" value="1"/>
</dbReference>
<dbReference type="SUPFAM" id="SSF50249">
    <property type="entry name" value="Nucleic acid-binding proteins"/>
    <property type="match status" value="1"/>
</dbReference>
<dbReference type="SUPFAM" id="SSF46915">
    <property type="entry name" value="Polynucleotide phosphorylase/guanosine pentaphosphate synthase (PNPase/GPSI), domain 3"/>
    <property type="match status" value="1"/>
</dbReference>
<dbReference type="SUPFAM" id="SSF55666">
    <property type="entry name" value="Ribonuclease PH domain 2-like"/>
    <property type="match status" value="2"/>
</dbReference>
<dbReference type="SUPFAM" id="SSF54211">
    <property type="entry name" value="Ribosomal protein S5 domain 2-like"/>
    <property type="match status" value="2"/>
</dbReference>
<dbReference type="PROSITE" id="PS50084">
    <property type="entry name" value="KH_TYPE_1"/>
    <property type="match status" value="1"/>
</dbReference>
<dbReference type="PROSITE" id="PS50126">
    <property type="entry name" value="S1"/>
    <property type="match status" value="1"/>
</dbReference>
<reference key="1">
    <citation type="submission" date="2007-05" db="EMBL/GenBank/DDBJ databases">
        <title>Complete sequence of Dehalococcoides sp. BAV1.</title>
        <authorList>
            <consortium name="US DOE Joint Genome Institute"/>
            <person name="Copeland A."/>
            <person name="Lucas S."/>
            <person name="Lapidus A."/>
            <person name="Barry K."/>
            <person name="Detter J.C."/>
            <person name="Glavina del Rio T."/>
            <person name="Hammon N."/>
            <person name="Israni S."/>
            <person name="Pitluck S."/>
            <person name="Lowry S."/>
            <person name="Clum A."/>
            <person name="Schmutz J."/>
            <person name="Larimer F."/>
            <person name="Land M."/>
            <person name="Hauser L."/>
            <person name="Kyrpides N."/>
            <person name="Kim E."/>
            <person name="Ritalahti K.M."/>
            <person name="Loeffler F."/>
            <person name="Richardson P."/>
        </authorList>
    </citation>
    <scope>NUCLEOTIDE SEQUENCE [LARGE SCALE GENOMIC DNA]</scope>
    <source>
        <strain>ATCC BAA-2100 / JCM 16839 / KCTC 5957 / BAV1</strain>
    </source>
</reference>